<sequence length="61" mass="7124">MSRTSLEVKAQRKPKFSARAYNRCPVCGRPRAYMRKFGLCRICFRNMALRGELPGVRKSSW</sequence>
<keyword id="KW-0479">Metal-binding</keyword>
<keyword id="KW-0687">Ribonucleoprotein</keyword>
<keyword id="KW-0689">Ribosomal protein</keyword>
<keyword id="KW-0694">RNA-binding</keyword>
<keyword id="KW-0699">rRNA-binding</keyword>
<keyword id="KW-0862">Zinc</keyword>
<reference key="1">
    <citation type="submission" date="2008-10" db="EMBL/GenBank/DDBJ databases">
        <title>Complete sequence of Desulfovibrio vulgaris str. 'Miyazaki F'.</title>
        <authorList>
            <person name="Lucas S."/>
            <person name="Copeland A."/>
            <person name="Lapidus A."/>
            <person name="Glavina del Rio T."/>
            <person name="Dalin E."/>
            <person name="Tice H."/>
            <person name="Bruce D."/>
            <person name="Goodwin L."/>
            <person name="Pitluck S."/>
            <person name="Sims D."/>
            <person name="Brettin T."/>
            <person name="Detter J.C."/>
            <person name="Han C."/>
            <person name="Larimer F."/>
            <person name="Land M."/>
            <person name="Hauser L."/>
            <person name="Kyrpides N."/>
            <person name="Mikhailova N."/>
            <person name="Hazen T.C."/>
            <person name="Richardson P."/>
        </authorList>
    </citation>
    <scope>NUCLEOTIDE SEQUENCE [LARGE SCALE GENOMIC DNA]</scope>
    <source>
        <strain>DSM 19637 / Miyazaki F</strain>
    </source>
</reference>
<proteinExistence type="inferred from homology"/>
<feature type="chain" id="PRO_1000143898" description="Small ribosomal subunit protein uS14">
    <location>
        <begin position="1"/>
        <end position="61"/>
    </location>
</feature>
<feature type="binding site" evidence="1">
    <location>
        <position position="24"/>
    </location>
    <ligand>
        <name>Zn(2+)</name>
        <dbReference type="ChEBI" id="CHEBI:29105"/>
    </ligand>
</feature>
<feature type="binding site" evidence="1">
    <location>
        <position position="27"/>
    </location>
    <ligand>
        <name>Zn(2+)</name>
        <dbReference type="ChEBI" id="CHEBI:29105"/>
    </ligand>
</feature>
<feature type="binding site" evidence="1">
    <location>
        <position position="40"/>
    </location>
    <ligand>
        <name>Zn(2+)</name>
        <dbReference type="ChEBI" id="CHEBI:29105"/>
    </ligand>
</feature>
<feature type="binding site" evidence="1">
    <location>
        <position position="43"/>
    </location>
    <ligand>
        <name>Zn(2+)</name>
        <dbReference type="ChEBI" id="CHEBI:29105"/>
    </ligand>
</feature>
<evidence type="ECO:0000255" key="1">
    <source>
        <dbReference type="HAMAP-Rule" id="MF_01364"/>
    </source>
</evidence>
<evidence type="ECO:0000305" key="2"/>
<name>RS14Z_NITV9</name>
<dbReference type="EMBL" id="CP001197">
    <property type="protein sequence ID" value="ACL07053.1"/>
    <property type="molecule type" value="Genomic_DNA"/>
</dbReference>
<dbReference type="SMR" id="B8DNA9"/>
<dbReference type="STRING" id="883.DvMF_0092"/>
<dbReference type="KEGG" id="dvm:DvMF_0092"/>
<dbReference type="eggNOG" id="COG0199">
    <property type="taxonomic scope" value="Bacteria"/>
</dbReference>
<dbReference type="HOGENOM" id="CLU_139869_3_0_7"/>
<dbReference type="OrthoDB" id="9810484at2"/>
<dbReference type="GO" id="GO:0005737">
    <property type="term" value="C:cytoplasm"/>
    <property type="evidence" value="ECO:0007669"/>
    <property type="project" value="UniProtKB-ARBA"/>
</dbReference>
<dbReference type="GO" id="GO:0015935">
    <property type="term" value="C:small ribosomal subunit"/>
    <property type="evidence" value="ECO:0007669"/>
    <property type="project" value="TreeGrafter"/>
</dbReference>
<dbReference type="GO" id="GO:0019843">
    <property type="term" value="F:rRNA binding"/>
    <property type="evidence" value="ECO:0007669"/>
    <property type="project" value="UniProtKB-UniRule"/>
</dbReference>
<dbReference type="GO" id="GO:0003735">
    <property type="term" value="F:structural constituent of ribosome"/>
    <property type="evidence" value="ECO:0007669"/>
    <property type="project" value="InterPro"/>
</dbReference>
<dbReference type="GO" id="GO:0008270">
    <property type="term" value="F:zinc ion binding"/>
    <property type="evidence" value="ECO:0007669"/>
    <property type="project" value="UniProtKB-UniRule"/>
</dbReference>
<dbReference type="GO" id="GO:0006412">
    <property type="term" value="P:translation"/>
    <property type="evidence" value="ECO:0007669"/>
    <property type="project" value="UniProtKB-UniRule"/>
</dbReference>
<dbReference type="FunFam" id="4.10.830.10:FF:000001">
    <property type="entry name" value="30S ribosomal protein S14 type Z"/>
    <property type="match status" value="1"/>
</dbReference>
<dbReference type="Gene3D" id="4.10.830.10">
    <property type="entry name" value="30s Ribosomal Protein S14, Chain N"/>
    <property type="match status" value="1"/>
</dbReference>
<dbReference type="HAMAP" id="MF_01364_B">
    <property type="entry name" value="Ribosomal_uS14_2_B"/>
    <property type="match status" value="1"/>
</dbReference>
<dbReference type="InterPro" id="IPR001209">
    <property type="entry name" value="Ribosomal_uS14"/>
</dbReference>
<dbReference type="InterPro" id="IPR023053">
    <property type="entry name" value="Ribosomal_uS14_bact"/>
</dbReference>
<dbReference type="InterPro" id="IPR018271">
    <property type="entry name" value="Ribosomal_uS14_CS"/>
</dbReference>
<dbReference type="InterPro" id="IPR043140">
    <property type="entry name" value="Ribosomal_uS14_sf"/>
</dbReference>
<dbReference type="NCBIfam" id="NF005974">
    <property type="entry name" value="PRK08061.1"/>
    <property type="match status" value="1"/>
</dbReference>
<dbReference type="PANTHER" id="PTHR19836">
    <property type="entry name" value="30S RIBOSOMAL PROTEIN S14"/>
    <property type="match status" value="1"/>
</dbReference>
<dbReference type="PANTHER" id="PTHR19836:SF19">
    <property type="entry name" value="SMALL RIBOSOMAL SUBUNIT PROTEIN US14M"/>
    <property type="match status" value="1"/>
</dbReference>
<dbReference type="Pfam" id="PF00253">
    <property type="entry name" value="Ribosomal_S14"/>
    <property type="match status" value="1"/>
</dbReference>
<dbReference type="SUPFAM" id="SSF57716">
    <property type="entry name" value="Glucocorticoid receptor-like (DNA-binding domain)"/>
    <property type="match status" value="1"/>
</dbReference>
<dbReference type="PROSITE" id="PS00527">
    <property type="entry name" value="RIBOSOMAL_S14"/>
    <property type="match status" value="1"/>
</dbReference>
<organism>
    <name type="scientific">Nitratidesulfovibrio vulgaris (strain DSM 19637 / Miyazaki F)</name>
    <name type="common">Desulfovibrio vulgaris</name>
    <dbReference type="NCBI Taxonomy" id="883"/>
    <lineage>
        <taxon>Bacteria</taxon>
        <taxon>Pseudomonadati</taxon>
        <taxon>Thermodesulfobacteriota</taxon>
        <taxon>Desulfovibrionia</taxon>
        <taxon>Desulfovibrionales</taxon>
        <taxon>Desulfovibrionaceae</taxon>
        <taxon>Nitratidesulfovibrio</taxon>
    </lineage>
</organism>
<comment type="function">
    <text evidence="1">Binds 16S rRNA, required for the assembly of 30S particles and may also be responsible for determining the conformation of the 16S rRNA at the A site.</text>
</comment>
<comment type="cofactor">
    <cofactor evidence="1">
        <name>Zn(2+)</name>
        <dbReference type="ChEBI" id="CHEBI:29105"/>
    </cofactor>
    <text evidence="1">Binds 1 zinc ion per subunit.</text>
</comment>
<comment type="subunit">
    <text evidence="1">Part of the 30S ribosomal subunit. Contacts proteins S3 and S10.</text>
</comment>
<comment type="similarity">
    <text evidence="1">Belongs to the universal ribosomal protein uS14 family. Zinc-binding uS14 subfamily.</text>
</comment>
<protein>
    <recommendedName>
        <fullName evidence="1">Small ribosomal subunit protein uS14</fullName>
    </recommendedName>
    <alternativeName>
        <fullName evidence="2">30S ribosomal protein S14 type Z</fullName>
    </alternativeName>
</protein>
<accession>B8DNA9</accession>
<gene>
    <name evidence="1" type="primary">rpsZ</name>
    <name evidence="1" type="synonym">rpsN</name>
    <name type="ordered locus">DvMF_0092</name>
</gene>